<comment type="function">
    <text evidence="1">One of the primary rRNA binding proteins, it binds directly to 16S rRNA where it nucleates assembly of the body of the 30S subunit.</text>
</comment>
<comment type="function">
    <text evidence="1">With S5 and S12 plays an important role in translational accuracy.</text>
</comment>
<comment type="subunit">
    <text evidence="1">Part of the 30S ribosomal subunit. Contacts protein S5. The interaction surface between S4 and S5 is involved in control of translational fidelity.</text>
</comment>
<comment type="similarity">
    <text evidence="1">Belongs to the universal ribosomal protein uS4 family.</text>
</comment>
<dbReference type="EMBL" id="AP008229">
    <property type="protein sequence ID" value="BAE70119.1"/>
    <property type="molecule type" value="Genomic_DNA"/>
</dbReference>
<dbReference type="RefSeq" id="WP_011260018.1">
    <property type="nucleotide sequence ID" value="NC_007705.1"/>
</dbReference>
<dbReference type="SMR" id="Q2P008"/>
<dbReference type="GeneID" id="77338690"/>
<dbReference type="KEGG" id="xom:XOO3364"/>
<dbReference type="HOGENOM" id="CLU_092403_0_2_6"/>
<dbReference type="GO" id="GO:0015935">
    <property type="term" value="C:small ribosomal subunit"/>
    <property type="evidence" value="ECO:0007669"/>
    <property type="project" value="InterPro"/>
</dbReference>
<dbReference type="GO" id="GO:0019843">
    <property type="term" value="F:rRNA binding"/>
    <property type="evidence" value="ECO:0007669"/>
    <property type="project" value="UniProtKB-UniRule"/>
</dbReference>
<dbReference type="GO" id="GO:0003735">
    <property type="term" value="F:structural constituent of ribosome"/>
    <property type="evidence" value="ECO:0007669"/>
    <property type="project" value="InterPro"/>
</dbReference>
<dbReference type="GO" id="GO:0042274">
    <property type="term" value="P:ribosomal small subunit biogenesis"/>
    <property type="evidence" value="ECO:0007669"/>
    <property type="project" value="TreeGrafter"/>
</dbReference>
<dbReference type="GO" id="GO:0006412">
    <property type="term" value="P:translation"/>
    <property type="evidence" value="ECO:0007669"/>
    <property type="project" value="UniProtKB-UniRule"/>
</dbReference>
<dbReference type="CDD" id="cd00165">
    <property type="entry name" value="S4"/>
    <property type="match status" value="1"/>
</dbReference>
<dbReference type="FunFam" id="1.10.1050.10:FF:000001">
    <property type="entry name" value="30S ribosomal protein S4"/>
    <property type="match status" value="1"/>
</dbReference>
<dbReference type="FunFam" id="3.10.290.10:FF:000001">
    <property type="entry name" value="30S ribosomal protein S4"/>
    <property type="match status" value="1"/>
</dbReference>
<dbReference type="Gene3D" id="1.10.1050.10">
    <property type="entry name" value="Ribosomal Protein S4 Delta 41, Chain A, domain 1"/>
    <property type="match status" value="1"/>
</dbReference>
<dbReference type="Gene3D" id="3.10.290.10">
    <property type="entry name" value="RNA-binding S4 domain"/>
    <property type="match status" value="1"/>
</dbReference>
<dbReference type="HAMAP" id="MF_01306_B">
    <property type="entry name" value="Ribosomal_uS4_B"/>
    <property type="match status" value="1"/>
</dbReference>
<dbReference type="InterPro" id="IPR022801">
    <property type="entry name" value="Ribosomal_uS4"/>
</dbReference>
<dbReference type="InterPro" id="IPR005709">
    <property type="entry name" value="Ribosomal_uS4_bac-type"/>
</dbReference>
<dbReference type="InterPro" id="IPR018079">
    <property type="entry name" value="Ribosomal_uS4_CS"/>
</dbReference>
<dbReference type="InterPro" id="IPR001912">
    <property type="entry name" value="Ribosomal_uS4_N"/>
</dbReference>
<dbReference type="InterPro" id="IPR002942">
    <property type="entry name" value="S4_RNA-bd"/>
</dbReference>
<dbReference type="InterPro" id="IPR036986">
    <property type="entry name" value="S4_RNA-bd_sf"/>
</dbReference>
<dbReference type="NCBIfam" id="NF003717">
    <property type="entry name" value="PRK05327.1"/>
    <property type="match status" value="1"/>
</dbReference>
<dbReference type="NCBIfam" id="TIGR01017">
    <property type="entry name" value="rpsD_bact"/>
    <property type="match status" value="1"/>
</dbReference>
<dbReference type="PANTHER" id="PTHR11831">
    <property type="entry name" value="30S 40S RIBOSOMAL PROTEIN"/>
    <property type="match status" value="1"/>
</dbReference>
<dbReference type="PANTHER" id="PTHR11831:SF4">
    <property type="entry name" value="SMALL RIBOSOMAL SUBUNIT PROTEIN US4M"/>
    <property type="match status" value="1"/>
</dbReference>
<dbReference type="Pfam" id="PF00163">
    <property type="entry name" value="Ribosomal_S4"/>
    <property type="match status" value="1"/>
</dbReference>
<dbReference type="Pfam" id="PF01479">
    <property type="entry name" value="S4"/>
    <property type="match status" value="1"/>
</dbReference>
<dbReference type="SMART" id="SM01390">
    <property type="entry name" value="Ribosomal_S4"/>
    <property type="match status" value="1"/>
</dbReference>
<dbReference type="SMART" id="SM00363">
    <property type="entry name" value="S4"/>
    <property type="match status" value="1"/>
</dbReference>
<dbReference type="SUPFAM" id="SSF55174">
    <property type="entry name" value="Alpha-L RNA-binding motif"/>
    <property type="match status" value="1"/>
</dbReference>
<dbReference type="PROSITE" id="PS00632">
    <property type="entry name" value="RIBOSOMAL_S4"/>
    <property type="match status" value="1"/>
</dbReference>
<dbReference type="PROSITE" id="PS50889">
    <property type="entry name" value="S4"/>
    <property type="match status" value="1"/>
</dbReference>
<keyword id="KW-0687">Ribonucleoprotein</keyword>
<keyword id="KW-0689">Ribosomal protein</keyword>
<keyword id="KW-0694">RNA-binding</keyword>
<keyword id="KW-0699">rRNA-binding</keyword>
<protein>
    <recommendedName>
        <fullName evidence="1">Small ribosomal subunit protein uS4</fullName>
    </recommendedName>
    <alternativeName>
        <fullName evidence="2">30S ribosomal protein S4</fullName>
    </alternativeName>
</protein>
<gene>
    <name evidence="1" type="primary">rpsD</name>
    <name type="ordered locus">XOO3364</name>
</gene>
<sequence length="208" mass="23343">MARYIGPTCKLARREGADLSLKSPARALDSKCKLEQKPGQHGASRKGKLSDYATQLREKQKVKRIYGLLERQFRNYYKKASTKKGNTGENLLQLLETRLDNVCYRMGFAVTRPAARQLVSHRCVLVNGKSVNLASYQIKAGDAITLSEKAQKQLRVQEALTVAEQHDMTPSWVEVDSKKFSGVFKAVPDRADLPSDINEALIVELYSK</sequence>
<organism>
    <name type="scientific">Xanthomonas oryzae pv. oryzae (strain MAFF 311018)</name>
    <dbReference type="NCBI Taxonomy" id="342109"/>
    <lineage>
        <taxon>Bacteria</taxon>
        <taxon>Pseudomonadati</taxon>
        <taxon>Pseudomonadota</taxon>
        <taxon>Gammaproteobacteria</taxon>
        <taxon>Lysobacterales</taxon>
        <taxon>Lysobacteraceae</taxon>
        <taxon>Xanthomonas</taxon>
    </lineage>
</organism>
<reference key="1">
    <citation type="journal article" date="2005" name="Jpn. Agric. Res. Q.">
        <title>Genome sequence of Xanthomonas oryzae pv. oryzae suggests contribution of large numbers of effector genes and insertion sequences to its race diversity.</title>
        <authorList>
            <person name="Ochiai H."/>
            <person name="Inoue Y."/>
            <person name="Takeya M."/>
            <person name="Sasaki A."/>
            <person name="Kaku H."/>
        </authorList>
    </citation>
    <scope>NUCLEOTIDE SEQUENCE [LARGE SCALE GENOMIC DNA]</scope>
    <source>
        <strain>MAFF 311018</strain>
    </source>
</reference>
<feature type="chain" id="PRO_0000293397" description="Small ribosomal subunit protein uS4">
    <location>
        <begin position="1"/>
        <end position="208"/>
    </location>
</feature>
<feature type="domain" description="S4 RNA-binding" evidence="1">
    <location>
        <begin position="97"/>
        <end position="160"/>
    </location>
</feature>
<evidence type="ECO:0000255" key="1">
    <source>
        <dbReference type="HAMAP-Rule" id="MF_01306"/>
    </source>
</evidence>
<evidence type="ECO:0000305" key="2"/>
<proteinExistence type="inferred from homology"/>
<accession>Q2P008</accession>
<name>RS4_XANOM</name>